<organism>
    <name type="scientific">Sulfolobus acidocaldarius (strain ATCC 33909 / DSM 639 / JCM 8929 / NBRC 15157 / NCIMB 11770)</name>
    <dbReference type="NCBI Taxonomy" id="330779"/>
    <lineage>
        <taxon>Archaea</taxon>
        <taxon>Thermoproteota</taxon>
        <taxon>Thermoprotei</taxon>
        <taxon>Sulfolobales</taxon>
        <taxon>Sulfolobaceae</taxon>
        <taxon>Sulfolobus</taxon>
    </lineage>
</organism>
<sequence>MTLQRTFVMIKPDGVRRRLVGEIISRFEKRGFNILALKMVHMDRATAERLYQEHKGKGFFNELINYIISGPVVCMIIEGDDAVSVVRKMIGATDPKEASPGTIRGDYALSKSENVIHASDSEEKAKTEMGIFFQDVTEIGAQARM</sequence>
<reference key="1">
    <citation type="journal article" date="2005" name="J. Bacteriol.">
        <title>The genome of Sulfolobus acidocaldarius, a model organism of the Crenarchaeota.</title>
        <authorList>
            <person name="Chen L."/>
            <person name="Bruegger K."/>
            <person name="Skovgaard M."/>
            <person name="Redder P."/>
            <person name="She Q."/>
            <person name="Torarinsson E."/>
            <person name="Greve B."/>
            <person name="Awayez M."/>
            <person name="Zibat A."/>
            <person name="Klenk H.-P."/>
            <person name="Garrett R.A."/>
        </authorList>
    </citation>
    <scope>NUCLEOTIDE SEQUENCE [LARGE SCALE GENOMIC DNA]</scope>
    <source>
        <strain>ATCC 33909 / DSM 639 / JCM 8929 / NBRC 15157 / NCIMB 11770</strain>
    </source>
</reference>
<protein>
    <recommendedName>
        <fullName evidence="1">Nucleoside diphosphate kinase</fullName>
        <shortName evidence="1">NDK</shortName>
        <shortName evidence="1">NDP kinase</shortName>
        <ecNumber evidence="1">2.7.4.6</ecNumber>
    </recommendedName>
    <alternativeName>
        <fullName evidence="1">Nucleoside-2-P kinase</fullName>
    </alternativeName>
</protein>
<name>NDK_SULAC</name>
<evidence type="ECO:0000255" key="1">
    <source>
        <dbReference type="HAMAP-Rule" id="MF_00451"/>
    </source>
</evidence>
<feature type="chain" id="PRO_0000137101" description="Nucleoside diphosphate kinase">
    <location>
        <begin position="1"/>
        <end position="145"/>
    </location>
</feature>
<feature type="active site" description="Pros-phosphohistidine intermediate" evidence="1">
    <location>
        <position position="117"/>
    </location>
</feature>
<feature type="binding site" evidence="1">
    <location>
        <position position="11"/>
    </location>
    <ligand>
        <name>ATP</name>
        <dbReference type="ChEBI" id="CHEBI:30616"/>
    </ligand>
</feature>
<feature type="binding site" evidence="1">
    <location>
        <position position="59"/>
    </location>
    <ligand>
        <name>ATP</name>
        <dbReference type="ChEBI" id="CHEBI:30616"/>
    </ligand>
</feature>
<feature type="binding site" evidence="1">
    <location>
        <position position="87"/>
    </location>
    <ligand>
        <name>ATP</name>
        <dbReference type="ChEBI" id="CHEBI:30616"/>
    </ligand>
</feature>
<feature type="binding site" evidence="1">
    <location>
        <position position="93"/>
    </location>
    <ligand>
        <name>ATP</name>
        <dbReference type="ChEBI" id="CHEBI:30616"/>
    </ligand>
</feature>
<feature type="binding site" evidence="1">
    <location>
        <position position="104"/>
    </location>
    <ligand>
        <name>ATP</name>
        <dbReference type="ChEBI" id="CHEBI:30616"/>
    </ligand>
</feature>
<feature type="binding site" evidence="1">
    <location>
        <position position="114"/>
    </location>
    <ligand>
        <name>ATP</name>
        <dbReference type="ChEBI" id="CHEBI:30616"/>
    </ligand>
</feature>
<gene>
    <name evidence="1" type="primary">ndk</name>
    <name type="ordered locus">Saci_0696</name>
</gene>
<dbReference type="EC" id="2.7.4.6" evidence="1"/>
<dbReference type="EMBL" id="CP000077">
    <property type="protein sequence ID" value="AAY80076.1"/>
    <property type="molecule type" value="Genomic_DNA"/>
</dbReference>
<dbReference type="RefSeq" id="WP_011277578.1">
    <property type="nucleotide sequence ID" value="NC_007181.1"/>
</dbReference>
<dbReference type="SMR" id="Q4JAV3"/>
<dbReference type="STRING" id="330779.Saci_0696"/>
<dbReference type="GeneID" id="14551211"/>
<dbReference type="GeneID" id="78441038"/>
<dbReference type="KEGG" id="sai:Saci_0696"/>
<dbReference type="PATRIC" id="fig|330779.12.peg.664"/>
<dbReference type="eggNOG" id="arCOG04313">
    <property type="taxonomic scope" value="Archaea"/>
</dbReference>
<dbReference type="HOGENOM" id="CLU_060216_6_3_2"/>
<dbReference type="Proteomes" id="UP000001018">
    <property type="component" value="Chromosome"/>
</dbReference>
<dbReference type="GO" id="GO:0005737">
    <property type="term" value="C:cytoplasm"/>
    <property type="evidence" value="ECO:0007669"/>
    <property type="project" value="UniProtKB-SubCell"/>
</dbReference>
<dbReference type="GO" id="GO:0005524">
    <property type="term" value="F:ATP binding"/>
    <property type="evidence" value="ECO:0007669"/>
    <property type="project" value="UniProtKB-UniRule"/>
</dbReference>
<dbReference type="GO" id="GO:0046872">
    <property type="term" value="F:metal ion binding"/>
    <property type="evidence" value="ECO:0007669"/>
    <property type="project" value="UniProtKB-KW"/>
</dbReference>
<dbReference type="GO" id="GO:0004550">
    <property type="term" value="F:nucleoside diphosphate kinase activity"/>
    <property type="evidence" value="ECO:0007669"/>
    <property type="project" value="UniProtKB-UniRule"/>
</dbReference>
<dbReference type="GO" id="GO:0006241">
    <property type="term" value="P:CTP biosynthetic process"/>
    <property type="evidence" value="ECO:0007669"/>
    <property type="project" value="UniProtKB-UniRule"/>
</dbReference>
<dbReference type="GO" id="GO:0006183">
    <property type="term" value="P:GTP biosynthetic process"/>
    <property type="evidence" value="ECO:0007669"/>
    <property type="project" value="UniProtKB-UniRule"/>
</dbReference>
<dbReference type="GO" id="GO:0006228">
    <property type="term" value="P:UTP biosynthetic process"/>
    <property type="evidence" value="ECO:0007669"/>
    <property type="project" value="UniProtKB-UniRule"/>
</dbReference>
<dbReference type="CDD" id="cd04413">
    <property type="entry name" value="NDPk_I"/>
    <property type="match status" value="1"/>
</dbReference>
<dbReference type="FunFam" id="3.30.70.141:FF:000003">
    <property type="entry name" value="Nucleoside diphosphate kinase"/>
    <property type="match status" value="1"/>
</dbReference>
<dbReference type="Gene3D" id="3.30.70.141">
    <property type="entry name" value="Nucleoside diphosphate kinase-like domain"/>
    <property type="match status" value="1"/>
</dbReference>
<dbReference type="HAMAP" id="MF_00451">
    <property type="entry name" value="NDP_kinase"/>
    <property type="match status" value="1"/>
</dbReference>
<dbReference type="InterPro" id="IPR034907">
    <property type="entry name" value="NDK-like_dom"/>
</dbReference>
<dbReference type="InterPro" id="IPR036850">
    <property type="entry name" value="NDK-like_dom_sf"/>
</dbReference>
<dbReference type="InterPro" id="IPR001564">
    <property type="entry name" value="Nucleoside_diP_kinase"/>
</dbReference>
<dbReference type="InterPro" id="IPR023005">
    <property type="entry name" value="Nucleoside_diP_kinase_AS"/>
</dbReference>
<dbReference type="NCBIfam" id="NF001908">
    <property type="entry name" value="PRK00668.1"/>
    <property type="match status" value="1"/>
</dbReference>
<dbReference type="PANTHER" id="PTHR11349">
    <property type="entry name" value="NUCLEOSIDE DIPHOSPHATE KINASE"/>
    <property type="match status" value="1"/>
</dbReference>
<dbReference type="Pfam" id="PF00334">
    <property type="entry name" value="NDK"/>
    <property type="match status" value="1"/>
</dbReference>
<dbReference type="PRINTS" id="PR01243">
    <property type="entry name" value="NUCDPKINASE"/>
</dbReference>
<dbReference type="SMART" id="SM00562">
    <property type="entry name" value="NDK"/>
    <property type="match status" value="1"/>
</dbReference>
<dbReference type="SUPFAM" id="SSF54919">
    <property type="entry name" value="Nucleoside diphosphate kinase, NDK"/>
    <property type="match status" value="1"/>
</dbReference>
<dbReference type="PROSITE" id="PS00469">
    <property type="entry name" value="NDPK"/>
    <property type="match status" value="1"/>
</dbReference>
<dbReference type="PROSITE" id="PS51374">
    <property type="entry name" value="NDPK_LIKE"/>
    <property type="match status" value="1"/>
</dbReference>
<comment type="function">
    <text evidence="1">Major role in the synthesis of nucleoside triphosphates other than ATP. The ATP gamma phosphate is transferred to the NDP beta phosphate via a ping-pong mechanism, using a phosphorylated active-site intermediate.</text>
</comment>
<comment type="catalytic activity">
    <reaction evidence="1">
        <text>a 2'-deoxyribonucleoside 5'-diphosphate + ATP = a 2'-deoxyribonucleoside 5'-triphosphate + ADP</text>
        <dbReference type="Rhea" id="RHEA:44640"/>
        <dbReference type="ChEBI" id="CHEBI:30616"/>
        <dbReference type="ChEBI" id="CHEBI:61560"/>
        <dbReference type="ChEBI" id="CHEBI:73316"/>
        <dbReference type="ChEBI" id="CHEBI:456216"/>
        <dbReference type="EC" id="2.7.4.6"/>
    </reaction>
</comment>
<comment type="catalytic activity">
    <reaction evidence="1">
        <text>a ribonucleoside 5'-diphosphate + ATP = a ribonucleoside 5'-triphosphate + ADP</text>
        <dbReference type="Rhea" id="RHEA:18113"/>
        <dbReference type="ChEBI" id="CHEBI:30616"/>
        <dbReference type="ChEBI" id="CHEBI:57930"/>
        <dbReference type="ChEBI" id="CHEBI:61557"/>
        <dbReference type="ChEBI" id="CHEBI:456216"/>
        <dbReference type="EC" id="2.7.4.6"/>
    </reaction>
</comment>
<comment type="cofactor">
    <cofactor evidence="1">
        <name>Mg(2+)</name>
        <dbReference type="ChEBI" id="CHEBI:18420"/>
    </cofactor>
</comment>
<comment type="subcellular location">
    <subcellularLocation>
        <location evidence="1">Cytoplasm</location>
    </subcellularLocation>
</comment>
<comment type="similarity">
    <text evidence="1">Belongs to the NDK family.</text>
</comment>
<keyword id="KW-0067">ATP-binding</keyword>
<keyword id="KW-0963">Cytoplasm</keyword>
<keyword id="KW-0418">Kinase</keyword>
<keyword id="KW-0460">Magnesium</keyword>
<keyword id="KW-0479">Metal-binding</keyword>
<keyword id="KW-0546">Nucleotide metabolism</keyword>
<keyword id="KW-0547">Nucleotide-binding</keyword>
<keyword id="KW-0597">Phosphoprotein</keyword>
<keyword id="KW-1185">Reference proteome</keyword>
<keyword id="KW-0808">Transferase</keyword>
<proteinExistence type="inferred from homology"/>
<accession>Q4JAV3</accession>